<comment type="function">
    <text evidence="3">Shows a paralytic effect in fish.</text>
</comment>
<comment type="subcellular location">
    <subcellularLocation>
        <location evidence="3">Secreted</location>
    </subcellularLocation>
</comment>
<comment type="tissue specificity">
    <text evidence="6">Expressed by the venom duct.</text>
</comment>
<comment type="domain">
    <text evidence="5">The cysteine framework is III (CC-C-C-CC). Classified in the M-1 branch, since 1 residue stands between the fourth and the fifth cysteine residues.</text>
</comment>
<comment type="mass spectrometry" mass="2373.97" method="Electrospray" evidence="3"/>
<comment type="miscellaneous">
    <text evidence="6">Found in injectable (milked) (IV) venom.</text>
</comment>
<comment type="miscellaneous">
    <text evidence="6">Surprisingly, the propeptide sequence 36-49 has been identified in the venom. It is unknown whether it is a by-product of incomplete enzymatic degradation of the precursor, or if it has a biological function on its own (PubMed:22705119).</text>
</comment>
<comment type="similarity">
    <text evidence="5">Belongs to the conotoxin M superfamily.</text>
</comment>
<sequence length="73" mass="8160">MSKLGVLLTICLLLFPLTALPMDGDQSVDRPAERMQDDISSEQYPLFNQKRRCCGEGASCPVYSRDRLICSCC</sequence>
<reference key="1">
    <citation type="journal article" date="2012" name="J. Proteomics">
        <title>Large-scale discovery of conopeptides and conoproteins in the injectable venom of a fish-hunting cone snail using a combined proteomic and transcriptomic approach.</title>
        <authorList>
            <person name="Violette A."/>
            <person name="Biass D."/>
            <person name="Dutertre S."/>
            <person name="Koua D."/>
            <person name="Piquemal D."/>
            <person name="Pierrat F."/>
            <person name="Stocklin R."/>
            <person name="Favreau P."/>
        </authorList>
    </citation>
    <scope>NUCLEOTIDE SEQUENCE [MRNA]</scope>
    <scope>FUNCTION</scope>
    <scope>MASS SPECTROMETRY</scope>
    <scope>IDENTIFICATION BY MASS SPECTROMETRY</scope>
    <scope>SUBCELLULAR LOCATION</scope>
    <source>
        <tissue>Venom</tissue>
        <tissue>Venom duct</tissue>
    </source>
</reference>
<name>CM3E_CONCN</name>
<accession>P0DKQ0</accession>
<accession>S6CRD6</accession>
<evidence type="ECO:0000250" key="1">
    <source>
        <dbReference type="UniProtKB" id="Q5EHP3"/>
    </source>
</evidence>
<evidence type="ECO:0000255" key="2"/>
<evidence type="ECO:0000269" key="3">
    <source>
    </source>
</evidence>
<evidence type="ECO:0000303" key="4">
    <source>
    </source>
</evidence>
<evidence type="ECO:0000305" key="5"/>
<evidence type="ECO:0000305" key="6">
    <source>
    </source>
</evidence>
<protein>
    <recommendedName>
        <fullName evidence="4">Conotoxin CnIIIE</fullName>
    </recommendedName>
</protein>
<feature type="signal peptide" evidence="2">
    <location>
        <begin position="1"/>
        <end position="19"/>
    </location>
</feature>
<feature type="propeptide" id="PRO_0000419878" evidence="6">
    <location>
        <begin position="20"/>
        <end position="49"/>
    </location>
</feature>
<feature type="peptide" id="PRO_0000419879" description="Conotoxin CnIIIE" evidence="3">
    <location>
        <begin position="52"/>
        <end position="73"/>
    </location>
</feature>
<feature type="disulfide bond" evidence="1">
    <location>
        <begin position="53"/>
        <end position="72"/>
    </location>
</feature>
<feature type="disulfide bond" evidence="1">
    <location>
        <begin position="54"/>
        <end position="70"/>
    </location>
</feature>
<feature type="disulfide bond" evidence="1">
    <location>
        <begin position="60"/>
        <end position="73"/>
    </location>
</feature>
<dbReference type="EMBL" id="HE856378">
    <property type="protein sequence ID" value="CCI55491.1"/>
    <property type="molecule type" value="mRNA"/>
</dbReference>
<dbReference type="GO" id="GO:0005576">
    <property type="term" value="C:extracellular region"/>
    <property type="evidence" value="ECO:0007669"/>
    <property type="project" value="UniProtKB-SubCell"/>
</dbReference>
<dbReference type="GO" id="GO:0008200">
    <property type="term" value="F:ion channel inhibitor activity"/>
    <property type="evidence" value="ECO:0007669"/>
    <property type="project" value="InterPro"/>
</dbReference>
<dbReference type="GO" id="GO:0090729">
    <property type="term" value="F:toxin activity"/>
    <property type="evidence" value="ECO:0007669"/>
    <property type="project" value="UniProtKB-KW"/>
</dbReference>
<dbReference type="InterPro" id="IPR004214">
    <property type="entry name" value="Conotoxin"/>
</dbReference>
<dbReference type="Pfam" id="PF02950">
    <property type="entry name" value="Conotoxin"/>
    <property type="match status" value="1"/>
</dbReference>
<organism>
    <name type="scientific">Conus consors</name>
    <name type="common">Singed cone</name>
    <dbReference type="NCBI Taxonomy" id="101297"/>
    <lineage>
        <taxon>Eukaryota</taxon>
        <taxon>Metazoa</taxon>
        <taxon>Spiralia</taxon>
        <taxon>Lophotrochozoa</taxon>
        <taxon>Mollusca</taxon>
        <taxon>Gastropoda</taxon>
        <taxon>Caenogastropoda</taxon>
        <taxon>Neogastropoda</taxon>
        <taxon>Conoidea</taxon>
        <taxon>Conidae</taxon>
        <taxon>Conus</taxon>
        <taxon>Pionoconus</taxon>
    </lineage>
</organism>
<keyword id="KW-0165">Cleavage on pair of basic residues</keyword>
<keyword id="KW-1015">Disulfide bond</keyword>
<keyword id="KW-0528">Neurotoxin</keyword>
<keyword id="KW-0964">Secreted</keyword>
<keyword id="KW-0732">Signal</keyword>
<keyword id="KW-0800">Toxin</keyword>
<proteinExistence type="evidence at protein level"/>